<dbReference type="EC" id="5.6.1.7" evidence="1"/>
<dbReference type="EMBL" id="U96731">
    <property type="protein sequence ID" value="AAB65631.1"/>
    <property type="molecule type" value="Genomic_DNA"/>
</dbReference>
<dbReference type="SMR" id="O34194"/>
<dbReference type="GO" id="GO:0005737">
    <property type="term" value="C:cytoplasm"/>
    <property type="evidence" value="ECO:0007669"/>
    <property type="project" value="UniProtKB-SubCell"/>
</dbReference>
<dbReference type="GO" id="GO:0005524">
    <property type="term" value="F:ATP binding"/>
    <property type="evidence" value="ECO:0007669"/>
    <property type="project" value="UniProtKB-KW"/>
</dbReference>
<dbReference type="GO" id="GO:0140662">
    <property type="term" value="F:ATP-dependent protein folding chaperone"/>
    <property type="evidence" value="ECO:0007669"/>
    <property type="project" value="InterPro"/>
</dbReference>
<dbReference type="GO" id="GO:0016853">
    <property type="term" value="F:isomerase activity"/>
    <property type="evidence" value="ECO:0007669"/>
    <property type="project" value="UniProtKB-KW"/>
</dbReference>
<dbReference type="GO" id="GO:0042026">
    <property type="term" value="P:protein refolding"/>
    <property type="evidence" value="ECO:0007669"/>
    <property type="project" value="InterPro"/>
</dbReference>
<dbReference type="CDD" id="cd03344">
    <property type="entry name" value="GroEL"/>
    <property type="match status" value="1"/>
</dbReference>
<dbReference type="FunFam" id="3.50.7.10:FF:000001">
    <property type="entry name" value="60 kDa chaperonin"/>
    <property type="match status" value="1"/>
</dbReference>
<dbReference type="Gene3D" id="3.50.7.10">
    <property type="entry name" value="GroEL"/>
    <property type="match status" value="1"/>
</dbReference>
<dbReference type="Gene3D" id="1.10.560.10">
    <property type="entry name" value="GroEL-like equatorial domain"/>
    <property type="match status" value="1"/>
</dbReference>
<dbReference type="Gene3D" id="3.30.260.10">
    <property type="entry name" value="TCP-1-like chaperonin intermediate domain"/>
    <property type="match status" value="1"/>
</dbReference>
<dbReference type="InterPro" id="IPR001844">
    <property type="entry name" value="Cpn60/GroEL"/>
</dbReference>
<dbReference type="InterPro" id="IPR002423">
    <property type="entry name" value="Cpn60/GroEL/TCP-1"/>
</dbReference>
<dbReference type="InterPro" id="IPR027409">
    <property type="entry name" value="GroEL-like_apical_dom_sf"/>
</dbReference>
<dbReference type="InterPro" id="IPR027413">
    <property type="entry name" value="GROEL-like_equatorial_sf"/>
</dbReference>
<dbReference type="InterPro" id="IPR027410">
    <property type="entry name" value="TCP-1-like_intermed_sf"/>
</dbReference>
<dbReference type="NCBIfam" id="NF000592">
    <property type="entry name" value="PRK00013.1"/>
    <property type="match status" value="1"/>
</dbReference>
<dbReference type="NCBIfam" id="NF009487">
    <property type="entry name" value="PRK12849.1"/>
    <property type="match status" value="1"/>
</dbReference>
<dbReference type="NCBIfam" id="NF009488">
    <property type="entry name" value="PRK12850.1"/>
    <property type="match status" value="1"/>
</dbReference>
<dbReference type="NCBIfam" id="NF009489">
    <property type="entry name" value="PRK12851.1"/>
    <property type="match status" value="1"/>
</dbReference>
<dbReference type="PANTHER" id="PTHR45633">
    <property type="entry name" value="60 KDA HEAT SHOCK PROTEIN, MITOCHONDRIAL"/>
    <property type="match status" value="1"/>
</dbReference>
<dbReference type="Pfam" id="PF00118">
    <property type="entry name" value="Cpn60_TCP1"/>
    <property type="match status" value="1"/>
</dbReference>
<dbReference type="PRINTS" id="PR00298">
    <property type="entry name" value="CHAPERONIN60"/>
</dbReference>
<dbReference type="SUPFAM" id="SSF52029">
    <property type="entry name" value="GroEL apical domain-like"/>
    <property type="match status" value="1"/>
</dbReference>
<dbReference type="SUPFAM" id="SSF48592">
    <property type="entry name" value="GroEL equatorial domain-like"/>
    <property type="match status" value="1"/>
</dbReference>
<gene>
    <name evidence="1" type="primary">groEL</name>
    <name evidence="1" type="synonym">groL</name>
    <name type="synonym">mopA</name>
</gene>
<keyword id="KW-0067">ATP-binding</keyword>
<keyword id="KW-0143">Chaperone</keyword>
<keyword id="KW-0963">Cytoplasm</keyword>
<keyword id="KW-0413">Isomerase</keyword>
<keyword id="KW-0547">Nucleotide-binding</keyword>
<accession>O34194</accession>
<reference key="1">
    <citation type="journal article" date="1997" name="J. Clin. Microbiol.">
        <title>PCR amplification and comparison of nucleotide sequences from the groESL heat shock operon of Ehrlichia species.</title>
        <authorList>
            <person name="Sumner J.W."/>
            <person name="Nicholson W.L."/>
            <person name="Massung R.F."/>
        </authorList>
    </citation>
    <scope>NUCLEOTIDE SEQUENCE [GENOMIC DNA]</scope>
    <source>
        <strain>FL</strain>
    </source>
</reference>
<comment type="function">
    <text evidence="1">Together with its co-chaperonin GroES, plays an essential role in assisting protein folding. The GroEL-GroES system forms a nano-cage that allows encapsulation of the non-native substrate proteins and provides a physical environment optimized to promote and accelerate protein folding.</text>
</comment>
<comment type="catalytic activity">
    <reaction evidence="1">
        <text>ATP + H2O + a folded polypeptide = ADP + phosphate + an unfolded polypeptide.</text>
        <dbReference type="EC" id="5.6.1.7"/>
    </reaction>
</comment>
<comment type="subunit">
    <text evidence="1">Forms a cylinder of 14 subunits composed of two heptameric rings stacked back-to-back. Interacts with the co-chaperonin GroES.</text>
</comment>
<comment type="subcellular location">
    <subcellularLocation>
        <location evidence="1">Cytoplasm</location>
    </subcellularLocation>
</comment>
<comment type="similarity">
    <text evidence="1 2">Belongs to the chaperonin (HSP60) family.</text>
</comment>
<sequence>MANVVVTGEQLDKAIREVVHILEDAVGCTAGPKGLTVAISKPYGAPEITKDGYKVIKSIKPEDPLALAIANIIAQSASQCNDKVGDGTTTCSILTAKVIEEVSKAKAAGADIVCIKDGVLKAKEAVLDALMSMKREVLSEEEIAQVATISANGDKNIGVKIAQCVQEVGKDGVITVEESKGFKELDVEKTDGMQFDRGYLSPYFVTNSEKMLVEFENPYILLTEKKLNIIQPILPILENVARSGRPLLIIAEDVEGEALSTLVLNKLRGGLHVAAVKAPGFGDRRKDMLGDIAILTGAKHVISDDLAIKMEDLTLAELGTAKNIRITKDTTTIIGSVDNSSDNVQSRINQIKVQIESSTSDYDKEKLRERLAKLSGGVAVLKVGGSSEVEVKERKDRVEDALHATRAAVE</sequence>
<name>CH60_EHRCA</name>
<evidence type="ECO:0000255" key="1">
    <source>
        <dbReference type="HAMAP-Rule" id="MF_00600"/>
    </source>
</evidence>
<evidence type="ECO:0000305" key="2"/>
<proteinExistence type="inferred from homology"/>
<feature type="chain" id="PRO_0000063361" description="Chaperonin GroEL">
    <location>
        <begin position="1"/>
        <end position="410" status="greater than"/>
    </location>
</feature>
<feature type="binding site" evidence="1">
    <location>
        <begin position="29"/>
        <end position="32"/>
    </location>
    <ligand>
        <name>ATP</name>
        <dbReference type="ChEBI" id="CHEBI:30616"/>
    </ligand>
</feature>
<feature type="binding site" evidence="1">
    <location>
        <position position="50"/>
    </location>
    <ligand>
        <name>ATP</name>
        <dbReference type="ChEBI" id="CHEBI:30616"/>
    </ligand>
</feature>
<feature type="binding site" evidence="1">
    <location>
        <begin position="86"/>
        <end position="90"/>
    </location>
    <ligand>
        <name>ATP</name>
        <dbReference type="ChEBI" id="CHEBI:30616"/>
    </ligand>
</feature>
<feature type="non-terminal residue">
    <location>
        <position position="410"/>
    </location>
</feature>
<protein>
    <recommendedName>
        <fullName evidence="1">Chaperonin GroEL</fullName>
        <ecNumber evidence="1">5.6.1.7</ecNumber>
    </recommendedName>
    <alternativeName>
        <fullName evidence="1">60 kDa chaperonin</fullName>
    </alternativeName>
    <alternativeName>
        <fullName evidence="1">Chaperonin-60</fullName>
        <shortName evidence="1">Cpn60</shortName>
    </alternativeName>
</protein>
<organism>
    <name type="scientific">Ehrlichia canis</name>
    <dbReference type="NCBI Taxonomy" id="944"/>
    <lineage>
        <taxon>Bacteria</taxon>
        <taxon>Pseudomonadati</taxon>
        <taxon>Pseudomonadota</taxon>
        <taxon>Alphaproteobacteria</taxon>
        <taxon>Rickettsiales</taxon>
        <taxon>Anaplasmataceae</taxon>
        <taxon>Ehrlichia</taxon>
    </lineage>
</organism>